<protein>
    <recommendedName>
        <fullName evidence="1">DNA gyrase inhibitor YacG</fullName>
    </recommendedName>
</protein>
<name>YACG_HAEIG</name>
<organism>
    <name type="scientific">Haemophilus influenzae (strain PittGG)</name>
    <dbReference type="NCBI Taxonomy" id="374931"/>
    <lineage>
        <taxon>Bacteria</taxon>
        <taxon>Pseudomonadati</taxon>
        <taxon>Pseudomonadota</taxon>
        <taxon>Gammaproteobacteria</taxon>
        <taxon>Pasteurellales</taxon>
        <taxon>Pasteurellaceae</taxon>
        <taxon>Haemophilus</taxon>
    </lineage>
</organism>
<gene>
    <name evidence="1" type="primary">yacG</name>
    <name type="ordered locus">CGSHiGG_08005</name>
</gene>
<dbReference type="EMBL" id="CP000672">
    <property type="protein sequence ID" value="ABR00441.1"/>
    <property type="molecule type" value="Genomic_DNA"/>
</dbReference>
<dbReference type="SMR" id="A5UI35"/>
<dbReference type="KEGG" id="hiq:CGSHiGG_08005"/>
<dbReference type="HOGENOM" id="CLU_178280_3_1_6"/>
<dbReference type="Proteomes" id="UP000001990">
    <property type="component" value="Chromosome"/>
</dbReference>
<dbReference type="GO" id="GO:0008657">
    <property type="term" value="F:DNA topoisomerase type II (double strand cut, ATP-hydrolyzing) inhibitor activity"/>
    <property type="evidence" value="ECO:0007669"/>
    <property type="project" value="UniProtKB-UniRule"/>
</dbReference>
<dbReference type="GO" id="GO:0008270">
    <property type="term" value="F:zinc ion binding"/>
    <property type="evidence" value="ECO:0007669"/>
    <property type="project" value="UniProtKB-UniRule"/>
</dbReference>
<dbReference type="GO" id="GO:0006355">
    <property type="term" value="P:regulation of DNA-templated transcription"/>
    <property type="evidence" value="ECO:0007669"/>
    <property type="project" value="InterPro"/>
</dbReference>
<dbReference type="Gene3D" id="3.30.50.10">
    <property type="entry name" value="Erythroid Transcription Factor GATA-1, subunit A"/>
    <property type="match status" value="1"/>
</dbReference>
<dbReference type="HAMAP" id="MF_00649">
    <property type="entry name" value="DNA_gyrase_inhibitor_YacG"/>
    <property type="match status" value="1"/>
</dbReference>
<dbReference type="InterPro" id="IPR005584">
    <property type="entry name" value="DNA_gyrase_inhibitor_YacG"/>
</dbReference>
<dbReference type="InterPro" id="IPR013088">
    <property type="entry name" value="Znf_NHR/GATA"/>
</dbReference>
<dbReference type="NCBIfam" id="NF001638">
    <property type="entry name" value="PRK00418.1"/>
    <property type="match status" value="1"/>
</dbReference>
<dbReference type="PANTHER" id="PTHR36150">
    <property type="entry name" value="DNA GYRASE INHIBITOR YACG"/>
    <property type="match status" value="1"/>
</dbReference>
<dbReference type="PANTHER" id="PTHR36150:SF1">
    <property type="entry name" value="DNA GYRASE INHIBITOR YACG"/>
    <property type="match status" value="1"/>
</dbReference>
<dbReference type="Pfam" id="PF03884">
    <property type="entry name" value="YacG"/>
    <property type="match status" value="1"/>
</dbReference>
<dbReference type="SUPFAM" id="SSF57716">
    <property type="entry name" value="Glucocorticoid receptor-like (DNA-binding domain)"/>
    <property type="match status" value="1"/>
</dbReference>
<evidence type="ECO:0000255" key="1">
    <source>
        <dbReference type="HAMAP-Rule" id="MF_00649"/>
    </source>
</evidence>
<comment type="function">
    <text evidence="1">Inhibits all the catalytic activities of DNA gyrase by preventing its interaction with DNA. Acts by binding directly to the C-terminal domain of GyrB, which probably disrupts DNA binding by the gyrase.</text>
</comment>
<comment type="cofactor">
    <cofactor evidence="1">
        <name>Zn(2+)</name>
        <dbReference type="ChEBI" id="CHEBI:29105"/>
    </cofactor>
    <text evidence="1">Binds 1 zinc ion.</text>
</comment>
<comment type="subunit">
    <text evidence="1">Interacts with GyrB.</text>
</comment>
<comment type="similarity">
    <text evidence="1">Belongs to the DNA gyrase inhibitor YacG family.</text>
</comment>
<reference key="1">
    <citation type="journal article" date="2007" name="Genome Biol.">
        <title>Characterization and modeling of the Haemophilus influenzae core and supragenomes based on the complete genomic sequences of Rd and 12 clinical nontypeable strains.</title>
        <authorList>
            <person name="Hogg J.S."/>
            <person name="Hu F.Z."/>
            <person name="Janto B."/>
            <person name="Boissy R."/>
            <person name="Hayes J."/>
            <person name="Keefe R."/>
            <person name="Post J.C."/>
            <person name="Ehrlich G.D."/>
        </authorList>
    </citation>
    <scope>NUCLEOTIDE SEQUENCE [LARGE SCALE GENOMIC DNA]</scope>
    <source>
        <strain>PittGG</strain>
    </source>
</reference>
<accession>A5UI35</accession>
<keyword id="KW-0479">Metal-binding</keyword>
<keyword id="KW-0862">Zinc</keyword>
<sequence>MPDEMIEVPCPICQKSVPWINESTFRPFCSKRCQLIDLGEWAAEEKAIPSDTADFAMDPNMSDGWSIK</sequence>
<proteinExistence type="inferred from homology"/>
<feature type="chain" id="PRO_1000056976" description="DNA gyrase inhibitor YacG">
    <location>
        <begin position="1"/>
        <end position="68"/>
    </location>
</feature>
<feature type="binding site" evidence="1">
    <location>
        <position position="10"/>
    </location>
    <ligand>
        <name>Zn(2+)</name>
        <dbReference type="ChEBI" id="CHEBI:29105"/>
    </ligand>
</feature>
<feature type="binding site" evidence="1">
    <location>
        <position position="13"/>
    </location>
    <ligand>
        <name>Zn(2+)</name>
        <dbReference type="ChEBI" id="CHEBI:29105"/>
    </ligand>
</feature>
<feature type="binding site" evidence="1">
    <location>
        <position position="29"/>
    </location>
    <ligand>
        <name>Zn(2+)</name>
        <dbReference type="ChEBI" id="CHEBI:29105"/>
    </ligand>
</feature>
<feature type="binding site" evidence="1">
    <location>
        <position position="33"/>
    </location>
    <ligand>
        <name>Zn(2+)</name>
        <dbReference type="ChEBI" id="CHEBI:29105"/>
    </ligand>
</feature>